<proteinExistence type="inferred from homology"/>
<organism>
    <name type="scientific">Burkholderia pseudomallei (strain K96243)</name>
    <dbReference type="NCBI Taxonomy" id="272560"/>
    <lineage>
        <taxon>Bacteria</taxon>
        <taxon>Pseudomonadati</taxon>
        <taxon>Pseudomonadota</taxon>
        <taxon>Betaproteobacteria</taxon>
        <taxon>Burkholderiales</taxon>
        <taxon>Burkholderiaceae</taxon>
        <taxon>Burkholderia</taxon>
        <taxon>pseudomallei group</taxon>
    </lineage>
</organism>
<keyword id="KW-0240">DNA-directed RNA polymerase</keyword>
<keyword id="KW-0548">Nucleotidyltransferase</keyword>
<keyword id="KW-1185">Reference proteome</keyword>
<keyword id="KW-0804">Transcription</keyword>
<keyword id="KW-0808">Transferase</keyword>
<gene>
    <name evidence="1" type="primary">rpoB</name>
    <name type="ordered locus">BPSL3221</name>
</gene>
<sequence length="1368" mass="153151">MQYSFTEKKRIRKSFAKRSIVHQVPFLLATQLESFSTFLQADVPTAQRKSEGLQAAFTSVFPIVSHNGFARLEFVSYALSSPAFNIKECQQRGLTYCSALRAKVRLVLLDKESPSKPVVKEVKEQEVYMGEIPLMTPTGSFVINGTERVIVSQLHRSPGVFFEHDKGKTHSSGKLLFSARIIPYRGSWLDFEFDPKDVLYFRVDRRRKMPVTILLKAIGLTPEQILANFFVFDNFTLMDEGAQMEFVPERLRGEVARFDITDREGKVIVQKDKRINAKHIRDLEAAKTKYISVPEDYLLGRVLAKNVVDGDTGEVIANANDEITEGVLEKLREAKIKEIQTLYTNDLDQGPYISSTLRVDETVDKTAARIAIYRMMRPGEPPTEEAVEALFNRLFYSEDAYDLSKVGRMKFNRRVGRDEITGPMTLQDDDILATIKILVELRNGKGEVDDIDHLGNRRVRCVGELAENQFRAGLVRVERAVKERLGQAESENLMPHDLINSKPISSAIREFFGSSQLSQFMDQTNPLSEITHKRRVSALGPGGLTRERAGFEVRDVHPTHYGRVCPIETPEGPNIGLINSLALYAHLNEYGFLETPYRKVVDSKVTDQIDYLSAIEEGRYMIAQANAAIGDDGALVDELVSSREAGETMMVTPDRIQYMDVAPSQIVSVAASLIPFLEHDDANRALMGSNMQRQAVPCLRPEKPVVGTGIERTVAVDSGTTVQALRGGVVDYVDAGRIVIRVNDDEAVAGEVGVDIYNLIKYTRSNQNTNINQRPIVKMGDKVSRGDVLADGASTDLGELALGQNMLIAFMPWNGYNFEDSILISERVVADDRYTSIHIEELNVVARDTKLGPEEITRDISNLAEVQLGRLDESGIVYIGAEVEAGDVLVGKVTPKGETQLTPEEKLLRAIFGEKASDVKDTSLRVPSGMSGTVIDVQVFTREGIQRDKRAQQIIDDELKRYRLDLNDQLRIVEGDAFQRLARMLVGKVANGGPKKLAKGTKIDQAYLEDLDHYHWFDIRLADDEAAVQLEAIKNSIEEKRHQFDLAFEEKRKKLTQGDELPPGVLKMVKVYLAVKRRLQPGDKMAGRHGNKGVVSKIVPVEDMPYMADGRPADVVLNPLGVPSRMNVGQVLEVHLGWAAKGLGWRIGEMLARQTKIEELRVFLTKIYNESGRAEDLESFSDDEILELAKNLREGVPFATPVFDGATEEEMSKMLDLAFPDDIAEQLDMNPSKNQVRLYDGRTGEPFERRVTVGYMHYLKLHHLVDDKMHARSTGPYSLVTQQPLGGKAQFGGQRFGEMEVWALEAYGASYVLQEMLTVKSDDVTGRTKVYENLVKGDHVIDAGMPESFNVLVKEIRSLGIDIDLDRN</sequence>
<name>RPOB_BURPS</name>
<dbReference type="EC" id="2.7.7.6" evidence="1"/>
<dbReference type="EMBL" id="BX571965">
    <property type="protein sequence ID" value="CAH37232.1"/>
    <property type="molecule type" value="Genomic_DNA"/>
</dbReference>
<dbReference type="RefSeq" id="WP_004198365.1">
    <property type="nucleotide sequence ID" value="NZ_CP009538.1"/>
</dbReference>
<dbReference type="RefSeq" id="YP_109815.1">
    <property type="nucleotide sequence ID" value="NC_006350.1"/>
</dbReference>
<dbReference type="SMR" id="Q63Q03"/>
<dbReference type="STRING" id="272560.BPSL3221"/>
<dbReference type="GeneID" id="92980328"/>
<dbReference type="KEGG" id="bps:BPSL3221"/>
<dbReference type="PATRIC" id="fig|272560.51.peg.2017"/>
<dbReference type="eggNOG" id="COG0085">
    <property type="taxonomic scope" value="Bacteria"/>
</dbReference>
<dbReference type="Proteomes" id="UP000000605">
    <property type="component" value="Chromosome 1"/>
</dbReference>
<dbReference type="GO" id="GO:0000428">
    <property type="term" value="C:DNA-directed RNA polymerase complex"/>
    <property type="evidence" value="ECO:0007669"/>
    <property type="project" value="UniProtKB-KW"/>
</dbReference>
<dbReference type="GO" id="GO:0003677">
    <property type="term" value="F:DNA binding"/>
    <property type="evidence" value="ECO:0007669"/>
    <property type="project" value="UniProtKB-UniRule"/>
</dbReference>
<dbReference type="GO" id="GO:0003899">
    <property type="term" value="F:DNA-directed RNA polymerase activity"/>
    <property type="evidence" value="ECO:0007669"/>
    <property type="project" value="UniProtKB-UniRule"/>
</dbReference>
<dbReference type="GO" id="GO:0032549">
    <property type="term" value="F:ribonucleoside binding"/>
    <property type="evidence" value="ECO:0007669"/>
    <property type="project" value="InterPro"/>
</dbReference>
<dbReference type="GO" id="GO:0006351">
    <property type="term" value="P:DNA-templated transcription"/>
    <property type="evidence" value="ECO:0007669"/>
    <property type="project" value="UniProtKB-UniRule"/>
</dbReference>
<dbReference type="CDD" id="cd00653">
    <property type="entry name" value="RNA_pol_B_RPB2"/>
    <property type="match status" value="1"/>
</dbReference>
<dbReference type="FunFam" id="2.40.50.100:FF:000006">
    <property type="entry name" value="DNA-directed RNA polymerase subunit beta"/>
    <property type="match status" value="1"/>
</dbReference>
<dbReference type="FunFam" id="2.40.50.150:FF:000001">
    <property type="entry name" value="DNA-directed RNA polymerase subunit beta"/>
    <property type="match status" value="1"/>
</dbReference>
<dbReference type="FunFam" id="3.90.1110.10:FF:000004">
    <property type="entry name" value="DNA-directed RNA polymerase subunit beta"/>
    <property type="match status" value="1"/>
</dbReference>
<dbReference type="FunFam" id="3.90.1800.10:FF:000001">
    <property type="entry name" value="DNA-directed RNA polymerase subunit beta"/>
    <property type="match status" value="1"/>
</dbReference>
<dbReference type="Gene3D" id="2.40.50.100">
    <property type="match status" value="1"/>
</dbReference>
<dbReference type="Gene3D" id="2.40.50.150">
    <property type="match status" value="1"/>
</dbReference>
<dbReference type="Gene3D" id="3.90.1100.10">
    <property type="match status" value="2"/>
</dbReference>
<dbReference type="Gene3D" id="2.30.150.10">
    <property type="entry name" value="DNA-directed RNA polymerase, beta subunit, external 1 domain"/>
    <property type="match status" value="1"/>
</dbReference>
<dbReference type="Gene3D" id="2.40.270.10">
    <property type="entry name" value="DNA-directed RNA polymerase, subunit 2, domain 6"/>
    <property type="match status" value="2"/>
</dbReference>
<dbReference type="Gene3D" id="3.90.1800.10">
    <property type="entry name" value="RNA polymerase alpha subunit dimerisation domain"/>
    <property type="match status" value="1"/>
</dbReference>
<dbReference type="Gene3D" id="3.90.1110.10">
    <property type="entry name" value="RNA polymerase Rpb2, domain 2"/>
    <property type="match status" value="2"/>
</dbReference>
<dbReference type="HAMAP" id="MF_01321">
    <property type="entry name" value="RNApol_bact_RpoB"/>
    <property type="match status" value="1"/>
</dbReference>
<dbReference type="InterPro" id="IPR042107">
    <property type="entry name" value="DNA-dir_RNA_pol_bsu_ext_1_sf"/>
</dbReference>
<dbReference type="InterPro" id="IPR019462">
    <property type="entry name" value="DNA-dir_RNA_pol_bsu_external_1"/>
</dbReference>
<dbReference type="InterPro" id="IPR015712">
    <property type="entry name" value="DNA-dir_RNA_pol_su2"/>
</dbReference>
<dbReference type="InterPro" id="IPR007120">
    <property type="entry name" value="DNA-dir_RNAP_su2_dom"/>
</dbReference>
<dbReference type="InterPro" id="IPR037033">
    <property type="entry name" value="DNA-dir_RNAP_su2_hyb_sf"/>
</dbReference>
<dbReference type="InterPro" id="IPR010243">
    <property type="entry name" value="RNA_pol_bsu_bac"/>
</dbReference>
<dbReference type="InterPro" id="IPR007121">
    <property type="entry name" value="RNA_pol_bsu_CS"/>
</dbReference>
<dbReference type="InterPro" id="IPR007644">
    <property type="entry name" value="RNA_pol_bsu_protrusion"/>
</dbReference>
<dbReference type="InterPro" id="IPR007642">
    <property type="entry name" value="RNA_pol_Rpb2_2"/>
</dbReference>
<dbReference type="InterPro" id="IPR037034">
    <property type="entry name" value="RNA_pol_Rpb2_2_sf"/>
</dbReference>
<dbReference type="InterPro" id="IPR007645">
    <property type="entry name" value="RNA_pol_Rpb2_3"/>
</dbReference>
<dbReference type="InterPro" id="IPR007641">
    <property type="entry name" value="RNA_pol_Rpb2_7"/>
</dbReference>
<dbReference type="InterPro" id="IPR014724">
    <property type="entry name" value="RNA_pol_RPB2_OB-fold"/>
</dbReference>
<dbReference type="NCBIfam" id="NF001616">
    <property type="entry name" value="PRK00405.1"/>
    <property type="match status" value="1"/>
</dbReference>
<dbReference type="NCBIfam" id="TIGR02013">
    <property type="entry name" value="rpoB"/>
    <property type="match status" value="1"/>
</dbReference>
<dbReference type="PANTHER" id="PTHR20856">
    <property type="entry name" value="DNA-DIRECTED RNA POLYMERASE I SUBUNIT 2"/>
    <property type="match status" value="1"/>
</dbReference>
<dbReference type="Pfam" id="PF04563">
    <property type="entry name" value="RNA_pol_Rpb2_1"/>
    <property type="match status" value="1"/>
</dbReference>
<dbReference type="Pfam" id="PF04561">
    <property type="entry name" value="RNA_pol_Rpb2_2"/>
    <property type="match status" value="2"/>
</dbReference>
<dbReference type="Pfam" id="PF04565">
    <property type="entry name" value="RNA_pol_Rpb2_3"/>
    <property type="match status" value="1"/>
</dbReference>
<dbReference type="Pfam" id="PF10385">
    <property type="entry name" value="RNA_pol_Rpb2_45"/>
    <property type="match status" value="1"/>
</dbReference>
<dbReference type="Pfam" id="PF00562">
    <property type="entry name" value="RNA_pol_Rpb2_6"/>
    <property type="match status" value="1"/>
</dbReference>
<dbReference type="Pfam" id="PF04560">
    <property type="entry name" value="RNA_pol_Rpb2_7"/>
    <property type="match status" value="1"/>
</dbReference>
<dbReference type="SUPFAM" id="SSF64484">
    <property type="entry name" value="beta and beta-prime subunits of DNA dependent RNA-polymerase"/>
    <property type="match status" value="1"/>
</dbReference>
<dbReference type="PROSITE" id="PS01166">
    <property type="entry name" value="RNA_POL_BETA"/>
    <property type="match status" value="1"/>
</dbReference>
<protein>
    <recommendedName>
        <fullName evidence="1">DNA-directed RNA polymerase subunit beta</fullName>
        <shortName evidence="1">RNAP subunit beta</shortName>
        <ecNumber evidence="1">2.7.7.6</ecNumber>
    </recommendedName>
    <alternativeName>
        <fullName evidence="1">RNA polymerase subunit beta</fullName>
    </alternativeName>
    <alternativeName>
        <fullName evidence="1">Transcriptase subunit beta</fullName>
    </alternativeName>
</protein>
<accession>Q63Q03</accession>
<reference key="1">
    <citation type="journal article" date="2004" name="Proc. Natl. Acad. Sci. U.S.A.">
        <title>Genomic plasticity of the causative agent of melioidosis, Burkholderia pseudomallei.</title>
        <authorList>
            <person name="Holden M.T.G."/>
            <person name="Titball R.W."/>
            <person name="Peacock S.J."/>
            <person name="Cerdeno-Tarraga A.-M."/>
            <person name="Atkins T."/>
            <person name="Crossman L.C."/>
            <person name="Pitt T."/>
            <person name="Churcher C."/>
            <person name="Mungall K.L."/>
            <person name="Bentley S.D."/>
            <person name="Sebaihia M."/>
            <person name="Thomson N.R."/>
            <person name="Bason N."/>
            <person name="Beacham I.R."/>
            <person name="Brooks K."/>
            <person name="Brown K.A."/>
            <person name="Brown N.F."/>
            <person name="Challis G.L."/>
            <person name="Cherevach I."/>
            <person name="Chillingworth T."/>
            <person name="Cronin A."/>
            <person name="Crossett B."/>
            <person name="Davis P."/>
            <person name="DeShazer D."/>
            <person name="Feltwell T."/>
            <person name="Fraser A."/>
            <person name="Hance Z."/>
            <person name="Hauser H."/>
            <person name="Holroyd S."/>
            <person name="Jagels K."/>
            <person name="Keith K.E."/>
            <person name="Maddison M."/>
            <person name="Moule S."/>
            <person name="Price C."/>
            <person name="Quail M.A."/>
            <person name="Rabbinowitsch E."/>
            <person name="Rutherford K."/>
            <person name="Sanders M."/>
            <person name="Simmonds M."/>
            <person name="Songsivilai S."/>
            <person name="Stevens K."/>
            <person name="Tumapa S."/>
            <person name="Vesaratchavest M."/>
            <person name="Whitehead S."/>
            <person name="Yeats C."/>
            <person name="Barrell B.G."/>
            <person name="Oyston P.C.F."/>
            <person name="Parkhill J."/>
        </authorList>
    </citation>
    <scope>NUCLEOTIDE SEQUENCE [LARGE SCALE GENOMIC DNA]</scope>
    <source>
        <strain>K96243</strain>
    </source>
</reference>
<evidence type="ECO:0000255" key="1">
    <source>
        <dbReference type="HAMAP-Rule" id="MF_01321"/>
    </source>
</evidence>
<comment type="function">
    <text evidence="1">DNA-dependent RNA polymerase catalyzes the transcription of DNA into RNA using the four ribonucleoside triphosphates as substrates.</text>
</comment>
<comment type="catalytic activity">
    <reaction evidence="1">
        <text>RNA(n) + a ribonucleoside 5'-triphosphate = RNA(n+1) + diphosphate</text>
        <dbReference type="Rhea" id="RHEA:21248"/>
        <dbReference type="Rhea" id="RHEA-COMP:14527"/>
        <dbReference type="Rhea" id="RHEA-COMP:17342"/>
        <dbReference type="ChEBI" id="CHEBI:33019"/>
        <dbReference type="ChEBI" id="CHEBI:61557"/>
        <dbReference type="ChEBI" id="CHEBI:140395"/>
        <dbReference type="EC" id="2.7.7.6"/>
    </reaction>
</comment>
<comment type="subunit">
    <text evidence="1">The RNAP catalytic core consists of 2 alpha, 1 beta, 1 beta' and 1 omega subunit. When a sigma factor is associated with the core the holoenzyme is formed, which can initiate transcription.</text>
</comment>
<comment type="similarity">
    <text evidence="1">Belongs to the RNA polymerase beta chain family.</text>
</comment>
<feature type="chain" id="PRO_0000224038" description="DNA-directed RNA polymerase subunit beta">
    <location>
        <begin position="1"/>
        <end position="1368"/>
    </location>
</feature>